<gene>
    <name type="ORF">FV3-059L</name>
</gene>
<keyword id="KW-1185">Reference proteome</keyword>
<organism>
    <name type="scientific">Frog virus 3 (isolate Goorha)</name>
    <name type="common">FV-3</name>
    <dbReference type="NCBI Taxonomy" id="654924"/>
    <lineage>
        <taxon>Viruses</taxon>
        <taxon>Varidnaviria</taxon>
        <taxon>Bamfordvirae</taxon>
        <taxon>Nucleocytoviricota</taxon>
        <taxon>Megaviricetes</taxon>
        <taxon>Pimascovirales</taxon>
        <taxon>Iridoviridae</taxon>
        <taxon>Alphairidovirinae</taxon>
        <taxon>Ranavirus</taxon>
        <taxon>Frog virus 3</taxon>
    </lineage>
</organism>
<proteinExistence type="predicted"/>
<sequence length="352" mass="39834">MPAQKRMSRYAYLVNKVAGPTLCGVFYGKYVEASDQAVSTCMAWFKIVVITKRVSAREWQEKGATVVTFRDLTRGTAPKAVECDLLYVRDFNPNTSQCWLPMLEGYKRTRTWVQIGHCNFESYGPHVMKKQLFGDFSYVPFVGYGSDVLALPETDEILEYDTSPFERFVHAVQRLNPKGESVWTHLGPDVAFAEMSIDAFNAVRESSPSPMSACMMDKTAVPQSLSEMVADYDWDHNEALRETPYVSSACAAMSRLTSSDPSLVVAVHEPKLQKYLEQFTGAKVVTYGKMLDSRMVPKRVVIFQAHPINGCKSGRKLMHMWRSMPGKPKITVIKPRQEWSAYYCNPLKRVGL</sequence>
<dbReference type="EMBL" id="AY548484">
    <property type="protein sequence ID" value="AAT09719.1"/>
    <property type="molecule type" value="Genomic_DNA"/>
</dbReference>
<dbReference type="RefSeq" id="YP_031638.1">
    <property type="nucleotide sequence ID" value="NC_005946.1"/>
</dbReference>
<dbReference type="KEGG" id="vg:2947759"/>
<dbReference type="Proteomes" id="UP000008770">
    <property type="component" value="Segment"/>
</dbReference>
<accession>Q6GZR6</accession>
<organismHost>
    <name type="scientific">Dryophytes versicolor</name>
    <name type="common">chameleon treefrog</name>
    <dbReference type="NCBI Taxonomy" id="30343"/>
</organismHost>
<organismHost>
    <name type="scientific">Lithobates pipiens</name>
    <name type="common">Northern leopard frog</name>
    <name type="synonym">Rana pipiens</name>
    <dbReference type="NCBI Taxonomy" id="8404"/>
</organismHost>
<organismHost>
    <name type="scientific">Lithobates sylvaticus</name>
    <name type="common">Wood frog</name>
    <name type="synonym">Rana sylvatica</name>
    <dbReference type="NCBI Taxonomy" id="45438"/>
</organismHost>
<organismHost>
    <name type="scientific">Notophthalmus viridescens</name>
    <name type="common">Eastern newt</name>
    <name type="synonym">Triturus viridescens</name>
    <dbReference type="NCBI Taxonomy" id="8316"/>
</organismHost>
<reference key="1">
    <citation type="journal article" date="2004" name="Virology">
        <title>Comparative genomic analyses of frog virus 3, type species of the genus Ranavirus (family Iridoviridae).</title>
        <authorList>
            <person name="Tan W.G."/>
            <person name="Barkman T.J."/>
            <person name="Gregory Chinchar V."/>
            <person name="Essani K."/>
        </authorList>
    </citation>
    <scope>NUCLEOTIDE SEQUENCE [LARGE SCALE GENOMIC DNA]</scope>
</reference>
<name>059L_FRG3G</name>
<protein>
    <recommendedName>
        <fullName>Uncharacterized protein 059L</fullName>
    </recommendedName>
</protein>
<feature type="chain" id="PRO_0000410531" description="Uncharacterized protein 059L">
    <location>
        <begin position="1"/>
        <end position="352"/>
    </location>
</feature>